<gene>
    <name type="primary">mip</name>
    <name type="ordered locus">LPC_2500</name>
</gene>
<name>MIP_LEGPC</name>
<evidence type="ECO:0000250" key="1"/>
<evidence type="ECO:0000255" key="2">
    <source>
        <dbReference type="PROSITE-ProRule" id="PRU00277"/>
    </source>
</evidence>
<evidence type="ECO:0000305" key="3"/>
<evidence type="ECO:0007829" key="4">
    <source>
        <dbReference type="PDB" id="8R39"/>
    </source>
</evidence>
<comment type="function">
    <text>Essential virulence factor associated with macrophage infectivity. Exhibits PPIase activity.</text>
</comment>
<comment type="catalytic activity">
    <reaction>
        <text>[protein]-peptidylproline (omega=180) = [protein]-peptidylproline (omega=0)</text>
        <dbReference type="Rhea" id="RHEA:16237"/>
        <dbReference type="Rhea" id="RHEA-COMP:10747"/>
        <dbReference type="Rhea" id="RHEA-COMP:10748"/>
        <dbReference type="ChEBI" id="CHEBI:83833"/>
        <dbReference type="ChEBI" id="CHEBI:83834"/>
        <dbReference type="EC" id="5.2.1.8"/>
    </reaction>
</comment>
<comment type="subcellular location">
    <subcellularLocation>
        <location>Cell outer membrane</location>
    </subcellularLocation>
</comment>
<comment type="similarity">
    <text evidence="3">Belongs to the FKBP-type PPIase family.</text>
</comment>
<sequence length="233" mass="24865">MKMKLVTAAVMGLAMSTAMAATDATSLATDKDKLSYSIGADLGKNFKNQGIDVNPEAMAKGMQDAMSGAQLALTEQQMKDVLNKFQKDLMAKRTAEFNKKADENKVKGEAFLTENKNKPGVVVLPSGLQYKVINAGNGVKPGKSDTVTVEYTGRLIDGTVFDSTEKTGKPATFQVSQVIPGWTEALQLMPAGSTWEIYVPSGLAYGPRSVGGPIGPNETLIFKIHLISVKKSS</sequence>
<proteinExistence type="evidence at protein level"/>
<accession>A5IGB8</accession>
<accession>P20380</accession>
<accession>P69059</accession>
<organism>
    <name type="scientific">Legionella pneumophila (strain Corby)</name>
    <dbReference type="NCBI Taxonomy" id="400673"/>
    <lineage>
        <taxon>Bacteria</taxon>
        <taxon>Pseudomonadati</taxon>
        <taxon>Pseudomonadota</taxon>
        <taxon>Gammaproteobacteria</taxon>
        <taxon>Legionellales</taxon>
        <taxon>Legionellaceae</taxon>
        <taxon>Legionella</taxon>
    </lineage>
</organism>
<keyword id="KW-0002">3D-structure</keyword>
<keyword id="KW-0998">Cell outer membrane</keyword>
<keyword id="KW-0413">Isomerase</keyword>
<keyword id="KW-0472">Membrane</keyword>
<keyword id="KW-0697">Rotamase</keyword>
<keyword id="KW-0732">Signal</keyword>
<keyword id="KW-0843">Virulence</keyword>
<dbReference type="EC" id="5.2.1.8"/>
<dbReference type="EMBL" id="S72442">
    <property type="protein sequence ID" value="AAB31083.1"/>
    <property type="molecule type" value="Genomic_DNA"/>
</dbReference>
<dbReference type="EMBL" id="CP000675">
    <property type="protein sequence ID" value="ABQ56418.1"/>
    <property type="molecule type" value="Genomic_DNA"/>
</dbReference>
<dbReference type="RefSeq" id="WP_011214989.1">
    <property type="nucleotide sequence ID" value="NZ_JAPMSS010000014.1"/>
</dbReference>
<dbReference type="PDB" id="8R39">
    <property type="method" value="X-ray"/>
    <property type="resolution" value="2.20 A"/>
    <property type="chains" value="C=26-233"/>
</dbReference>
<dbReference type="PDBsum" id="8R39"/>
<dbReference type="BMRB" id="A5IGB8"/>
<dbReference type="SMR" id="A5IGB8"/>
<dbReference type="KEGG" id="lpc:LPC_2500"/>
<dbReference type="HOGENOM" id="CLU_013615_0_1_6"/>
<dbReference type="GO" id="GO:0009279">
    <property type="term" value="C:cell outer membrane"/>
    <property type="evidence" value="ECO:0007669"/>
    <property type="project" value="UniProtKB-SubCell"/>
</dbReference>
<dbReference type="GO" id="GO:0003755">
    <property type="term" value="F:peptidyl-prolyl cis-trans isomerase activity"/>
    <property type="evidence" value="ECO:0007669"/>
    <property type="project" value="UniProtKB-KW"/>
</dbReference>
<dbReference type="GO" id="GO:0006457">
    <property type="term" value="P:protein folding"/>
    <property type="evidence" value="ECO:0007669"/>
    <property type="project" value="InterPro"/>
</dbReference>
<dbReference type="Gene3D" id="3.10.50.40">
    <property type="match status" value="1"/>
</dbReference>
<dbReference type="Gene3D" id="1.10.287.460">
    <property type="entry name" value="Peptidyl-prolyl cis-trans isomerase, FKBP-type, N-terminal domain"/>
    <property type="match status" value="1"/>
</dbReference>
<dbReference type="InterPro" id="IPR008104">
    <property type="entry name" value="INFPOTNTIATR"/>
</dbReference>
<dbReference type="InterPro" id="IPR046357">
    <property type="entry name" value="PPIase_dom_sf"/>
</dbReference>
<dbReference type="InterPro" id="IPR001179">
    <property type="entry name" value="PPIase_FKBP_dom"/>
</dbReference>
<dbReference type="InterPro" id="IPR000774">
    <property type="entry name" value="PPIase_FKBP_N"/>
</dbReference>
<dbReference type="InterPro" id="IPR036944">
    <property type="entry name" value="PPIase_FKBP_N_sf"/>
</dbReference>
<dbReference type="PANTHER" id="PTHR43811">
    <property type="entry name" value="FKBP-TYPE PEPTIDYL-PROLYL CIS-TRANS ISOMERASE FKPA"/>
    <property type="match status" value="1"/>
</dbReference>
<dbReference type="PANTHER" id="PTHR43811:SF57">
    <property type="entry name" value="FKBP-TYPE PEPTIDYL-PROLYL CIS-TRANS ISOMERASE FKPA-RELATED"/>
    <property type="match status" value="1"/>
</dbReference>
<dbReference type="Pfam" id="PF00254">
    <property type="entry name" value="FKBP_C"/>
    <property type="match status" value="1"/>
</dbReference>
<dbReference type="Pfam" id="PF01346">
    <property type="entry name" value="FKBP_N"/>
    <property type="match status" value="1"/>
</dbReference>
<dbReference type="PRINTS" id="PR01730">
    <property type="entry name" value="INFPOTNTIATR"/>
</dbReference>
<dbReference type="SUPFAM" id="SSF54534">
    <property type="entry name" value="FKBP-like"/>
    <property type="match status" value="1"/>
</dbReference>
<dbReference type="PROSITE" id="PS50059">
    <property type="entry name" value="FKBP_PPIASE"/>
    <property type="match status" value="1"/>
</dbReference>
<feature type="signal peptide" evidence="1">
    <location>
        <begin position="1"/>
        <end position="20"/>
    </location>
</feature>
<feature type="chain" id="PRO_0000304998" description="Outer membrane protein MIP">
    <location>
        <begin position="21"/>
        <end position="233"/>
    </location>
</feature>
<feature type="domain" description="PPIase FKBP-type" evidence="2">
    <location>
        <begin position="144"/>
        <end position="233"/>
    </location>
</feature>
<feature type="helix" evidence="4">
    <location>
        <begin position="30"/>
        <end position="49"/>
    </location>
</feature>
<feature type="helix" evidence="4">
    <location>
        <begin position="55"/>
        <end position="67"/>
    </location>
</feature>
<feature type="helix" evidence="4">
    <location>
        <begin position="75"/>
        <end position="115"/>
    </location>
</feature>
<feature type="strand" evidence="4">
    <location>
        <begin position="129"/>
        <end position="134"/>
    </location>
</feature>
<feature type="strand" evidence="4">
    <location>
        <begin position="146"/>
        <end position="154"/>
    </location>
</feature>
<feature type="strand" evidence="4">
    <location>
        <begin position="160"/>
        <end position="163"/>
    </location>
</feature>
<feature type="helix" evidence="4">
    <location>
        <begin position="164"/>
        <end position="167"/>
    </location>
</feature>
<feature type="strand" evidence="4">
    <location>
        <begin position="171"/>
        <end position="174"/>
    </location>
</feature>
<feature type="helix" evidence="4">
    <location>
        <begin position="175"/>
        <end position="177"/>
    </location>
</feature>
<feature type="helix" evidence="4">
    <location>
        <begin position="180"/>
        <end position="186"/>
    </location>
</feature>
<feature type="strand" evidence="4">
    <location>
        <begin position="194"/>
        <end position="199"/>
    </location>
</feature>
<feature type="helix" evidence="4">
    <location>
        <begin position="201"/>
        <end position="203"/>
    </location>
</feature>
<feature type="strand" evidence="4">
    <location>
        <begin position="210"/>
        <end position="213"/>
    </location>
</feature>
<feature type="strand" evidence="4">
    <location>
        <begin position="220"/>
        <end position="230"/>
    </location>
</feature>
<protein>
    <recommendedName>
        <fullName>Outer membrane protein MIP</fullName>
        <ecNumber>5.2.1.8</ecNumber>
    </recommendedName>
    <alternativeName>
        <fullName>Macrophage infectivity potentiator</fullName>
    </alternativeName>
    <alternativeName>
        <fullName>Peptidyl-prolyl cis-trans isomerase</fullName>
        <shortName>PPIase</shortName>
    </alternativeName>
    <alternativeName>
        <fullName>Rotamase</fullName>
    </alternativeName>
</protein>
<reference key="1">
    <citation type="journal article" date="1994" name="FEMS Microbiol. Lett.">
        <title>Characterization of Mip proteins of Legionella pneumophila.</title>
        <authorList>
            <person name="Ludwig B."/>
            <person name="Rahfeld J."/>
            <person name="Schmidt B."/>
            <person name="Mann K."/>
            <person name="Wintermeyer E."/>
            <person name="Fischer G."/>
            <person name="Hacker J."/>
        </authorList>
    </citation>
    <scope>NUCLEOTIDE SEQUENCE [GENOMIC DNA]</scope>
</reference>
<reference key="2">
    <citation type="submission" date="2006-11" db="EMBL/GenBank/DDBJ databases">
        <title>Identification and characterization of a new conjugation/ type IVA secretion system (trb/tra) of L. pneumophila Corby localized on a mobile genomic island.</title>
        <authorList>
            <person name="Gloeckner G."/>
            <person name="Albert-Weissenberger C."/>
            <person name="Weinmann E."/>
            <person name="Jacobi S."/>
            <person name="Schunder E."/>
            <person name="Steinert M."/>
            <person name="Buchrieser C."/>
            <person name="Hacker J."/>
            <person name="Heuner K."/>
        </authorList>
    </citation>
    <scope>NUCLEOTIDE SEQUENCE [LARGE SCALE GENOMIC DNA]</scope>
    <source>
        <strain>Corby</strain>
    </source>
</reference>